<keyword id="KW-0002">3D-structure</keyword>
<keyword id="KW-0025">Alternative splicing</keyword>
<keyword id="KW-1003">Cell membrane</keyword>
<keyword id="KW-0966">Cell projection</keyword>
<keyword id="KW-1015">Disulfide bond</keyword>
<keyword id="KW-0256">Endoplasmic reticulum</keyword>
<keyword id="KW-0967">Endosome</keyword>
<keyword id="KW-0325">Glycoprotein</keyword>
<keyword id="KW-0407">Ion channel</keyword>
<keyword id="KW-0406">Ion transport</keyword>
<keyword id="KW-1071">Ligand-gated ion channel</keyword>
<keyword id="KW-0449">Lipoprotein</keyword>
<keyword id="KW-0472">Membrane</keyword>
<keyword id="KW-0564">Palmitate</keyword>
<keyword id="KW-0597">Phosphoprotein</keyword>
<keyword id="KW-0628">Postsynaptic cell membrane</keyword>
<keyword id="KW-0675">Receptor</keyword>
<keyword id="KW-1185">Reference proteome</keyword>
<keyword id="KW-0732">Signal</keyword>
<keyword id="KW-0770">Synapse</keyword>
<keyword id="KW-0812">Transmembrane</keyword>
<keyword id="KW-1133">Transmembrane helix</keyword>
<keyword id="KW-0813">Transport</keyword>
<feature type="signal peptide" evidence="5">
    <location>
        <begin position="1"/>
        <end position="18"/>
    </location>
</feature>
<feature type="chain" id="PRO_0000011531" description="Glutamate receptor 1">
    <location>
        <begin position="19"/>
        <end position="907"/>
    </location>
</feature>
<feature type="topological domain" description="Extracellular" evidence="1">
    <location>
        <begin position="19"/>
        <end position="536"/>
    </location>
</feature>
<feature type="transmembrane region" description="Helical" evidence="1">
    <location>
        <begin position="537"/>
        <end position="557"/>
    </location>
</feature>
<feature type="topological domain" description="Cytoplasmic" evidence="1">
    <location>
        <begin position="558"/>
        <end position="584"/>
    </location>
</feature>
<feature type="intramembrane region" description="Helical; Pore-forming" evidence="1">
    <location>
        <begin position="585"/>
        <end position="600"/>
    </location>
</feature>
<feature type="intramembrane region" evidence="1">
    <location>
        <begin position="601"/>
        <end position="603"/>
    </location>
</feature>
<feature type="topological domain" description="Cytoplasmic" evidence="1">
    <location>
        <begin position="604"/>
        <end position="609"/>
    </location>
</feature>
<feature type="transmembrane region" description="Helical" evidence="1">
    <location>
        <begin position="610"/>
        <end position="630"/>
    </location>
</feature>
<feature type="topological domain" description="Extracellular" evidence="1">
    <location>
        <begin position="631"/>
        <end position="805"/>
    </location>
</feature>
<feature type="transmembrane region" description="Helical; Name=M4" evidence="1">
    <location>
        <begin position="806"/>
        <end position="826"/>
    </location>
</feature>
<feature type="topological domain" description="Cytoplasmic" evidence="1">
    <location>
        <begin position="827"/>
        <end position="907"/>
    </location>
</feature>
<feature type="region of interest" description="Disordered" evidence="6">
    <location>
        <begin position="857"/>
        <end position="881"/>
    </location>
</feature>
<feature type="short sequence motif" description="PDZ-binding">
    <location>
        <begin position="904"/>
        <end position="907"/>
    </location>
</feature>
<feature type="compositionally biased region" description="Gly residues" evidence="6">
    <location>
        <begin position="866"/>
        <end position="875"/>
    </location>
</feature>
<feature type="binding site" evidence="4">
    <location>
        <position position="492"/>
    </location>
    <ligand>
        <name>L-glutamate</name>
        <dbReference type="ChEBI" id="CHEBI:29985"/>
    </ligand>
</feature>
<feature type="binding site" evidence="4">
    <location>
        <position position="494"/>
    </location>
    <ligand>
        <name>L-glutamate</name>
        <dbReference type="ChEBI" id="CHEBI:29985"/>
    </ligand>
</feature>
<feature type="binding site" evidence="4">
    <location>
        <position position="499"/>
    </location>
    <ligand>
        <name>L-glutamate</name>
        <dbReference type="ChEBI" id="CHEBI:29985"/>
    </ligand>
</feature>
<feature type="binding site" evidence="4">
    <location>
        <position position="668"/>
    </location>
    <ligand>
        <name>L-glutamate</name>
        <dbReference type="ChEBI" id="CHEBI:29985"/>
    </ligand>
</feature>
<feature type="binding site" evidence="4">
    <location>
        <position position="669"/>
    </location>
    <ligand>
        <name>L-glutamate</name>
        <dbReference type="ChEBI" id="CHEBI:29985"/>
    </ligand>
</feature>
<feature type="binding site" evidence="4">
    <location>
        <position position="719"/>
    </location>
    <ligand>
        <name>L-glutamate</name>
        <dbReference type="ChEBI" id="CHEBI:29985"/>
    </ligand>
</feature>
<feature type="modified residue" description="Phosphoserine" evidence="23">
    <location>
        <position position="645"/>
    </location>
</feature>
<feature type="modified residue" description="Phosphoserine; by PKC" evidence="24">
    <location>
        <position position="710"/>
    </location>
</feature>
<feature type="modified residue" description="Phosphoserine; by PKC, PKA and CAMK2" evidence="23 25">
    <location>
        <position position="849"/>
    </location>
</feature>
<feature type="modified residue" description="Phosphoserine; by PKC, PKA and PKG/PRKG2" evidence="15 25">
    <location>
        <position position="863"/>
    </location>
</feature>
<feature type="lipid moiety-binding region" description="S-palmitoyl cysteine" evidence="1">
    <location>
        <position position="603"/>
    </location>
</feature>
<feature type="lipid moiety-binding region" description="S-palmitoyl cysteine" evidence="1">
    <location>
        <position position="829"/>
    </location>
</feature>
<feature type="glycosylation site" description="N-linked (GlcNAc...) asparagine" evidence="20 38">
    <location>
        <position position="63"/>
    </location>
</feature>
<feature type="glycosylation site" description="N-linked (GlcNAc...) asparagine" evidence="20 38">
    <location>
        <position position="249"/>
    </location>
</feature>
<feature type="glycosylation site" description="N-linked (GlcNAc...) asparagine" evidence="20 38">
    <location>
        <position position="257"/>
    </location>
</feature>
<feature type="glycosylation site" description="N-linked (GlcNAc...) asparagine" evidence="20 38">
    <location>
        <position position="363"/>
    </location>
</feature>
<feature type="glycosylation site" description="N-linked (GlcNAc...) asparagine" evidence="5">
    <location>
        <position position="401"/>
    </location>
</feature>
<feature type="glycosylation site" description="N-linked (GlcNAc...) asparagine" evidence="5">
    <location>
        <position position="406"/>
    </location>
</feature>
<feature type="disulfide bond" evidence="20 38">
    <location>
        <begin position="75"/>
        <end position="323"/>
    </location>
</feature>
<feature type="disulfide bond" evidence="2">
    <location>
        <begin position="732"/>
        <end position="787"/>
    </location>
</feature>
<feature type="splice variant" id="VSP_000097" description="In isoform Flip." evidence="27">
    <original>N</original>
    <variation>G</variation>
    <location>
        <position position="758"/>
    </location>
</feature>
<feature type="splice variant" id="VSP_000098" description="In isoform Flip." evidence="27">
    <original>N</original>
    <variation>S</variation>
    <location>
        <position position="768"/>
    </location>
</feature>
<feature type="splice variant" id="VSP_000099" description="In isoform Flip." evidence="27">
    <original>L</original>
    <variation>V</variation>
    <location>
        <position position="772"/>
    </location>
</feature>
<feature type="splice variant" id="VSP_000100" description="In isoform Flip." evidence="27">
    <original>N</original>
    <variation>S</variation>
    <location>
        <position position="778"/>
    </location>
</feature>
<feature type="splice variant" id="VSP_000101" description="In isoform Flip." evidence="27">
    <original>GGGD</original>
    <variation>KDSG</variation>
    <location>
        <begin position="790"/>
        <end position="793"/>
    </location>
</feature>
<feature type="sequence variant" evidence="12 24">
    <original>S</original>
    <variation>T</variation>
    <location>
        <position position="710"/>
    </location>
</feature>
<feature type="mutagenesis site" description="No effect on phosphorylation by CaMK2." evidence="25">
    <original>S</original>
    <variation>A</variation>
    <location>
        <position position="645"/>
    </location>
</feature>
<feature type="mutagenesis site" description="Abolishes phosphorylation by CaMK2." evidence="25">
    <original>S</original>
    <variation>A</variation>
    <location>
        <position position="849"/>
    </location>
</feature>
<feature type="mutagenesis site" description="Decreases binding efficiency to PRKG2.">
    <original>R</original>
    <variation>A</variation>
    <location>
        <position position="855"/>
    </location>
</feature>
<feature type="mutagenesis site" description="Abolishes binding to PRKG2." evidence="15">
    <original>R</original>
    <variation>E</variation>
    <location>
        <position position="855"/>
    </location>
</feature>
<feature type="mutagenesis site" description="Decreases synaptic insertion during chemical-induced long term potentiation." evidence="15">
    <original>S</original>
    <variation>A</variation>
    <location>
        <position position="863"/>
    </location>
</feature>
<feature type="mutagenesis site" description="Loss of interaction with DLG1." evidence="8">
    <original>T</original>
    <variation>A</variation>
    <location>
        <position position="905"/>
    </location>
</feature>
<feature type="mutagenesis site" description="Loss of interaction with DLG1." evidence="8">
    <original>L</original>
    <variation>A</variation>
    <location>
        <position position="907"/>
    </location>
</feature>
<feature type="sequence conflict" description="In Ref. 6; AAA63479." evidence="32" ref="6">
    <original>S</original>
    <variation>T</variation>
    <location>
        <position position="67"/>
    </location>
</feature>
<feature type="sequence conflict" description="In Ref. 6; AAA63479." evidence="32" ref="6">
    <original>A</original>
    <variation>R</variation>
    <location>
        <position position="248"/>
    </location>
</feature>
<feature type="sequence conflict" description="In Ref. 6; AAA63479." evidence="32" ref="6">
    <original>R</original>
    <variation>L</variation>
    <location>
        <position position="698"/>
    </location>
</feature>
<feature type="strand" evidence="40">
    <location>
        <begin position="23"/>
        <end position="32"/>
    </location>
</feature>
<feature type="strand" evidence="40">
    <location>
        <begin position="34"/>
        <end position="36"/>
    </location>
</feature>
<feature type="helix" evidence="40">
    <location>
        <begin position="37"/>
        <end position="46"/>
    </location>
</feature>
<feature type="strand" evidence="40">
    <location>
        <begin position="51"/>
        <end position="61"/>
    </location>
</feature>
<feature type="helix" evidence="40">
    <location>
        <begin position="67"/>
        <end position="79"/>
    </location>
</feature>
<feature type="strand" evidence="40">
    <location>
        <begin position="85"/>
        <end position="87"/>
    </location>
</feature>
<feature type="helix" evidence="40">
    <location>
        <begin position="91"/>
        <end position="104"/>
    </location>
</feature>
<feature type="strand" evidence="40">
    <location>
        <begin position="108"/>
        <end position="110"/>
    </location>
</feature>
<feature type="strand" evidence="40">
    <location>
        <begin position="122"/>
        <end position="124"/>
    </location>
</feature>
<feature type="helix" evidence="40">
    <location>
        <begin position="130"/>
        <end position="139"/>
    </location>
</feature>
<feature type="strand" evidence="40">
    <location>
        <begin position="144"/>
        <end position="149"/>
    </location>
</feature>
<feature type="turn" evidence="41">
    <location>
        <begin position="151"/>
        <end position="154"/>
    </location>
</feature>
<feature type="helix" evidence="40">
    <location>
        <begin position="156"/>
        <end position="168"/>
    </location>
</feature>
<feature type="strand" evidence="40">
    <location>
        <begin position="171"/>
        <end position="176"/>
    </location>
</feature>
<feature type="helix" evidence="40">
    <location>
        <begin position="177"/>
        <end position="179"/>
    </location>
</feature>
<feature type="helix" evidence="40">
    <location>
        <begin position="183"/>
        <end position="187"/>
    </location>
</feature>
<feature type="turn" evidence="40">
    <location>
        <begin position="188"/>
        <end position="191"/>
    </location>
</feature>
<feature type="strand" evidence="40">
    <location>
        <begin position="196"/>
        <end position="203"/>
    </location>
</feature>
<feature type="helix" evidence="40">
    <location>
        <begin position="206"/>
        <end position="208"/>
    </location>
</feature>
<feature type="helix" evidence="40">
    <location>
        <begin position="209"/>
        <end position="218"/>
    </location>
</feature>
<feature type="strand" evidence="40">
    <location>
        <begin position="225"/>
        <end position="233"/>
    </location>
</feature>
<feature type="helix" evidence="40">
    <location>
        <begin position="235"/>
        <end position="237"/>
    </location>
</feature>
<feature type="helix" evidence="40">
    <location>
        <begin position="240"/>
        <end position="245"/>
    </location>
</feature>
<feature type="strand" evidence="40">
    <location>
        <begin position="250"/>
        <end position="254"/>
    </location>
</feature>
<feature type="strand" evidence="41">
    <location>
        <begin position="258"/>
        <end position="260"/>
    </location>
</feature>
<feature type="helix" evidence="40">
    <location>
        <begin position="261"/>
        <end position="276"/>
    </location>
</feature>
<feature type="helix" evidence="40">
    <location>
        <begin position="288"/>
        <end position="309"/>
    </location>
</feature>
<feature type="helix" evidence="40">
    <location>
        <begin position="334"/>
        <end position="342"/>
    </location>
</feature>
<feature type="strand" evidence="40">
    <location>
        <begin position="346"/>
        <end position="348"/>
    </location>
</feature>
<feature type="strand" evidence="40">
    <location>
        <begin position="351"/>
        <end position="353"/>
    </location>
</feature>
<feature type="strand" evidence="40">
    <location>
        <begin position="359"/>
        <end position="361"/>
    </location>
</feature>
<feature type="strand" evidence="40">
    <location>
        <begin position="366"/>
        <end position="372"/>
    </location>
</feature>
<feature type="strand" evidence="40">
    <location>
        <begin position="375"/>
        <end position="383"/>
    </location>
</feature>
<feature type="turn" evidence="40">
    <location>
        <begin position="384"/>
        <end position="386"/>
    </location>
</feature>
<feature type="strand" evidence="40">
    <location>
        <begin position="387"/>
        <end position="390"/>
    </location>
</feature>
<feature type="strand" evidence="43">
    <location>
        <begin position="409"/>
        <end position="412"/>
    </location>
</feature>
<feature type="turn" evidence="43">
    <location>
        <begin position="417"/>
        <end position="419"/>
    </location>
</feature>
<feature type="strand" evidence="43">
    <location>
        <begin position="420"/>
        <end position="422"/>
    </location>
</feature>
<feature type="turn" evidence="43">
    <location>
        <begin position="424"/>
        <end position="428"/>
    </location>
</feature>
<feature type="helix" evidence="43">
    <location>
        <begin position="431"/>
        <end position="434"/>
    </location>
</feature>
<feature type="strand" evidence="43">
    <location>
        <begin position="435"/>
        <end position="437"/>
    </location>
</feature>
<feature type="helix" evidence="43">
    <location>
        <begin position="438"/>
        <end position="450"/>
    </location>
</feature>
<feature type="strand" evidence="43">
    <location>
        <begin position="454"/>
        <end position="456"/>
    </location>
</feature>
<feature type="strand" evidence="44">
    <location>
        <begin position="465"/>
        <end position="467"/>
    </location>
</feature>
<feature type="turn" evidence="43">
    <location>
        <begin position="469"/>
        <end position="471"/>
    </location>
</feature>
<feature type="helix" evidence="43">
    <location>
        <begin position="476"/>
        <end position="482"/>
    </location>
</feature>
<feature type="strand" evidence="43">
    <location>
        <begin position="487"/>
        <end position="494"/>
    </location>
</feature>
<feature type="helix" evidence="43">
    <location>
        <begin position="497"/>
        <end position="502"/>
    </location>
</feature>
<feature type="strand" evidence="43">
    <location>
        <begin position="503"/>
        <end position="505"/>
    </location>
</feature>
<feature type="strand" evidence="43">
    <location>
        <begin position="509"/>
        <end position="512"/>
    </location>
</feature>
<feature type="strand" evidence="43">
    <location>
        <begin position="514"/>
        <end position="518"/>
    </location>
</feature>
<feature type="helix" evidence="46">
    <location>
        <begin position="530"/>
        <end position="532"/>
    </location>
</feature>
<feature type="helix" evidence="46">
    <location>
        <begin position="537"/>
        <end position="558"/>
    </location>
</feature>
<feature type="strand" evidence="42">
    <location>
        <begin position="559"/>
        <end position="561"/>
    </location>
</feature>
<feature type="turn" evidence="47">
    <location>
        <begin position="562"/>
        <end position="564"/>
    </location>
</feature>
<feature type="helix" evidence="46">
    <location>
        <begin position="587"/>
        <end position="598"/>
    </location>
</feature>
<feature type="helix" evidence="46">
    <location>
        <begin position="610"/>
        <end position="638"/>
    </location>
</feature>
<feature type="turn" evidence="45">
    <location>
        <begin position="641"/>
        <end position="643"/>
    </location>
</feature>
<feature type="helix" evidence="43">
    <location>
        <begin position="650"/>
        <end position="655"/>
    </location>
</feature>
<feature type="strand" evidence="43">
    <location>
        <begin position="658"/>
        <end position="662"/>
    </location>
</feature>
<feature type="strand" evidence="43">
    <location>
        <begin position="664"/>
        <end position="667"/>
    </location>
</feature>
<feature type="helix" evidence="43">
    <location>
        <begin position="668"/>
        <end position="674"/>
    </location>
</feature>
<feature type="helix" evidence="43">
    <location>
        <begin position="679"/>
        <end position="689"/>
    </location>
</feature>
<feature type="strand" evidence="42">
    <location>
        <begin position="690"/>
        <end position="693"/>
    </location>
</feature>
<feature type="strand" evidence="43">
    <location>
        <begin position="697"/>
        <end position="699"/>
    </location>
</feature>
<feature type="helix" evidence="43">
    <location>
        <begin position="700"/>
        <end position="710"/>
    </location>
</feature>
<feature type="strand" evidence="43">
    <location>
        <begin position="713"/>
        <end position="719"/>
    </location>
</feature>
<feature type="helix" evidence="43">
    <location>
        <begin position="720"/>
        <end position="728"/>
    </location>
</feature>
<feature type="strand" evidence="43">
    <location>
        <begin position="729"/>
        <end position="731"/>
    </location>
</feature>
<feature type="strand" evidence="43">
    <location>
        <begin position="735"/>
        <end position="738"/>
    </location>
</feature>
<feature type="strand" evidence="43">
    <location>
        <begin position="744"/>
        <end position="751"/>
    </location>
</feature>
<feature type="helix" evidence="43">
    <location>
        <begin position="757"/>
        <end position="769"/>
    </location>
</feature>
<feature type="helix" evidence="43">
    <location>
        <begin position="772"/>
        <end position="781"/>
    </location>
</feature>
<feature type="turn" evidence="43">
    <location>
        <begin position="782"/>
        <end position="784"/>
    </location>
</feature>
<feature type="helix" evidence="46">
    <location>
        <begin position="803"/>
        <end position="832"/>
    </location>
</feature>
<feature type="strand" evidence="39">
    <location>
        <begin position="905"/>
        <end position="907"/>
    </location>
</feature>
<evidence type="ECO:0000250" key="1"/>
<evidence type="ECO:0000250" key="2">
    <source>
        <dbReference type="UniProtKB" id="P23818"/>
    </source>
</evidence>
<evidence type="ECO:0000250" key="3">
    <source>
        <dbReference type="UniProtKB" id="P42261"/>
    </source>
</evidence>
<evidence type="ECO:0000250" key="4">
    <source>
        <dbReference type="UniProtKB" id="P42262"/>
    </source>
</evidence>
<evidence type="ECO:0000255" key="5"/>
<evidence type="ECO:0000256" key="6">
    <source>
        <dbReference type="SAM" id="MobiDB-lite"/>
    </source>
</evidence>
<evidence type="ECO:0000269" key="7">
    <source>
    </source>
</evidence>
<evidence type="ECO:0000269" key="8">
    <source>
    </source>
</evidence>
<evidence type="ECO:0000269" key="9">
    <source>
    </source>
</evidence>
<evidence type="ECO:0000269" key="10">
    <source>
    </source>
</evidence>
<evidence type="ECO:0000269" key="11">
    <source>
    </source>
</evidence>
<evidence type="ECO:0000269" key="12">
    <source>
    </source>
</evidence>
<evidence type="ECO:0000269" key="13">
    <source>
    </source>
</evidence>
<evidence type="ECO:0000269" key="14">
    <source>
    </source>
</evidence>
<evidence type="ECO:0000269" key="15">
    <source>
    </source>
</evidence>
<evidence type="ECO:0000269" key="16">
    <source>
    </source>
</evidence>
<evidence type="ECO:0000269" key="17">
    <source>
    </source>
</evidence>
<evidence type="ECO:0000269" key="18">
    <source>
    </source>
</evidence>
<evidence type="ECO:0000269" key="19">
    <source>
    </source>
</evidence>
<evidence type="ECO:0000269" key="20">
    <source>
    </source>
</evidence>
<evidence type="ECO:0000269" key="21">
    <source>
    </source>
</evidence>
<evidence type="ECO:0000269" key="22">
    <source>
    </source>
</evidence>
<evidence type="ECO:0000269" key="23">
    <source>
    </source>
</evidence>
<evidence type="ECO:0000269" key="24">
    <source>
    </source>
</evidence>
<evidence type="ECO:0000269" key="25">
    <source>
    </source>
</evidence>
<evidence type="ECO:0000269" key="26">
    <source>
    </source>
</evidence>
<evidence type="ECO:0000303" key="27">
    <source>
    </source>
</evidence>
<evidence type="ECO:0000303" key="28">
    <source>
    </source>
</evidence>
<evidence type="ECO:0000303" key="29">
    <source>
    </source>
</evidence>
<evidence type="ECO:0000303" key="30">
    <source>
    </source>
</evidence>
<evidence type="ECO:0000303" key="31">
    <source>
    </source>
</evidence>
<evidence type="ECO:0000305" key="32"/>
<evidence type="ECO:0000305" key="33">
    <source>
    </source>
</evidence>
<evidence type="ECO:0000305" key="34">
    <source>
    </source>
</evidence>
<evidence type="ECO:0000312" key="35">
    <source>
        <dbReference type="RGD" id="621531"/>
    </source>
</evidence>
<evidence type="ECO:0007744" key="36">
    <source>
        <dbReference type="PDB" id="2AWW"/>
    </source>
</evidence>
<evidence type="ECO:0007744" key="37">
    <source>
        <dbReference type="PDB" id="2G2L"/>
    </source>
</evidence>
<evidence type="ECO:0007744" key="38">
    <source>
        <dbReference type="PDB" id="3SAJ"/>
    </source>
</evidence>
<evidence type="ECO:0007829" key="39">
    <source>
        <dbReference type="PDB" id="2AWW"/>
    </source>
</evidence>
<evidence type="ECO:0007829" key="40">
    <source>
        <dbReference type="PDB" id="3SAJ"/>
    </source>
</evidence>
<evidence type="ECO:0007829" key="41">
    <source>
        <dbReference type="PDB" id="7OCA"/>
    </source>
</evidence>
<evidence type="ECO:0007829" key="42">
    <source>
        <dbReference type="PDB" id="7OCE"/>
    </source>
</evidence>
<evidence type="ECO:0007829" key="43">
    <source>
        <dbReference type="PDB" id="8AYN"/>
    </source>
</evidence>
<evidence type="ECO:0007829" key="44">
    <source>
        <dbReference type="PDB" id="8C1P"/>
    </source>
</evidence>
<evidence type="ECO:0007829" key="45">
    <source>
        <dbReference type="PDB" id="8C1Q"/>
    </source>
</evidence>
<evidence type="ECO:0007829" key="46">
    <source>
        <dbReference type="PDB" id="8C2H"/>
    </source>
</evidence>
<evidence type="ECO:0007829" key="47">
    <source>
        <dbReference type="PDB" id="8C2I"/>
    </source>
</evidence>
<comment type="function">
    <text evidence="3 7 11 14 16 18 21 22">Ionotropic glutamate receptor that functions as a ligand-gated cation channel, gated by L-glutamate and glutamatergic agonists such as alpha-amino-3-hydroxy-5-methyl-4-isoxazolepropionic acid (AMPA), quisqualic acid, and kainic acid (PubMed:2166337, PubMed:2168579). L-glutamate acts as an excitatory neurotransmitter at many synapses in the central nervous system. Binding of the excitatory neurotransmitter L-glutamate induces a conformation change, leading to the opening of the cation channel, and thereby converts the chemical signal to an electrical impulse upon entry of monovalent and divalent cations such as sodium and calcium (PubMed:11773314, PubMed:18817736). The receptor then desensitizes rapidly and enters in a transient inactive state, characterized by the presence of bound agonist (PubMed:16793768, PubMed:19265014). In the presence of CACNG2 or CACNG4 or CACNG7 or CACNG8, shows resensitization which is characterized by a delayed accumulation of current flux upon continued application of L-glutamate (PubMed:16793768, PubMed:19265014). Resensitization is blocked by CNIH2 through interaction with CACNG8 in the CACNG8-containing AMPA receptors complex (By similarity). Calcium (Ca(2+)) permeability depends on subunits composition and, heteromeric channels containing edited GRIA2 subunit are calcium-impermeable (PubMed:1709304). Also permeable to other divalents cations such as strontium(2+) and magnesium(2+) and monovalent cations such as potassium(1+) and lithium(1+) (PubMed:11773314).</text>
</comment>
<comment type="catalytic activity">
    <reaction evidence="7 14">
        <text>Ca(2+)(in) = Ca(2+)(out)</text>
        <dbReference type="Rhea" id="RHEA:29671"/>
        <dbReference type="ChEBI" id="CHEBI:29108"/>
    </reaction>
</comment>
<comment type="catalytic activity">
    <reaction evidence="7 14">
        <text>Na(+)(in) = Na(+)(out)</text>
        <dbReference type="Rhea" id="RHEA:34963"/>
        <dbReference type="ChEBI" id="CHEBI:29101"/>
    </reaction>
</comment>
<comment type="catalytic activity">
    <reaction evidence="7 33">
        <text>Mg(2+)(in) = Mg(2+)(out)</text>
        <dbReference type="Rhea" id="RHEA:29827"/>
        <dbReference type="ChEBI" id="CHEBI:18420"/>
    </reaction>
</comment>
<comment type="catalytic activity">
    <reaction evidence="7 33">
        <text>Li(+)(in) = Li(+)(out)</text>
        <dbReference type="Rhea" id="RHEA:78551"/>
        <dbReference type="ChEBI" id="CHEBI:49713"/>
    </reaction>
</comment>
<comment type="catalytic activity">
    <reaction evidence="7 14">
        <text>K(+)(in) = K(+)(out)</text>
        <dbReference type="Rhea" id="RHEA:29463"/>
        <dbReference type="ChEBI" id="CHEBI:29103"/>
    </reaction>
</comment>
<comment type="catalytic activity">
    <reaction evidence="7 33">
        <text>Sr(2+)(in) = Sr(2+)(out)</text>
        <dbReference type="Rhea" id="RHEA:78679"/>
        <dbReference type="ChEBI" id="CHEBI:35104"/>
    </reaction>
</comment>
<comment type="activity regulation">
    <text evidence="21">Glutamate-gated receptor activity inhibited by DNQX (6,7-dinitroquinoxaline-2,3-dione).</text>
</comment>
<comment type="subunit">
    <text evidence="2 3 8 9 10 11 12 13 15 16 17 18 19 20 22 26">Homotetramer or heterotetramer of pore-forming glutamate receptor subunits; heteromeric assembly can be the result of both receptor subtype and flip-flop forms and according the composition, one partner can be dominant with respect to the fast desensitizing current component, whereas the other can determine the steady-state component (PubMed:1699275, PubMed:21639859, PubMed:2168579). Tetramers may be formed by the dimerization of dimers (By similarity). Found in a complex with GRIA2, GRIA3, GRIA4, CNIH2, CNIH3, CACNG2, CACNG3, CACNG4, CACNG5, CACNG7 and CACNG8 (PubMed:19265014). Interacts with HIP1 and RASGRF2. Interacts with SYNDIG1 and GRIA2 (By similarity). Interacts with DLG1 (via C-terminus) (PubMed:12070168, PubMed:17069616, PubMed:9677374). Interacts with LRFN1 (PubMed:16630835). Interacts with PRKG2 (PubMed:18031684). Interacts with CNIH2 and CACNG2 (PubMed:20805473). Interacts with CACNG5; this interaction modulates the gating (PubMed:18817736, PubMed:19234459). Interacts (via C-terminus) with PDLIM4 (via LIM domain); this interaction as well as the interaction of PDLIM4 with alpha-actinin is required for their colocalization in early endosomes (PubMed:15456832). Interacts with SNX27 (via PDZ domain); the interaction is required for recycling to the plasma membrane when endocytosed and prevent degradation in lysosomes. Interacts (via PDZ-binding motif) with SHANK3 (via PDZ domain) (By similarity). Interacts with CACNG3; associates GRIA1 with the adapter protein complex 4 (AP-4) to target GRIA1 to the somatodendritic compartment of neurons (By similarity). Interacts with CACNG2; this interaction mediates traffick to the plasma membrane and modulation of desensitization (PubMed:16793768). Interaction with CNIH2 and CNIH3; this interaction promotes expression at the plasma membrane and extensively modulates their gating properties by slowing deactivation and desensitization kinetics (PubMed:19265014). Found in a complex with GRIA2, GRIA3, GRIA4, DLG4, CACNG8 and CNIH2 (By similarity).</text>
</comment>
<comment type="interaction">
    <interactant intactId="EBI-371642">
        <id>P19490</id>
    </interactant>
    <interactant intactId="EBI-7090342">
        <id>P10608</id>
        <label>Adrb2</label>
    </interactant>
    <organismsDiffer>false</organismsDiffer>
    <experiments>3</experiments>
</comment>
<comment type="interaction">
    <interactant intactId="EBI-371642">
        <id>P19490</id>
    </interactant>
    <interactant intactId="EBI-15756732">
        <id>Q5FVC2</id>
        <label>Arhgef2</label>
    </interactant>
    <organismsDiffer>false</organismsDiffer>
    <experiments>4</experiments>
</comment>
<comment type="interaction">
    <interactant intactId="EBI-371642">
        <id>P19490</id>
    </interactant>
    <interactant intactId="EBI-8538384">
        <id>Q71RJ2</id>
        <label>Cacng2</label>
    </interactant>
    <organismsDiffer>false</organismsDiffer>
    <experiments>7</experiments>
</comment>
<comment type="interaction">
    <interactant intactId="EBI-371642">
        <id>P19490</id>
    </interactant>
    <interactant intactId="EBI-2640645">
        <id>P11275</id>
        <label>Camk2a</label>
    </interactant>
    <organismsDiffer>false</organismsDiffer>
    <experiments>3</experiments>
</comment>
<comment type="interaction">
    <interactant intactId="EBI-371642">
        <id>P19490</id>
    </interactant>
    <interactant intactId="EBI-15874082">
        <id>Q5BJU5</id>
        <label>Cnih2</label>
    </interactant>
    <organismsDiffer>false</organismsDiffer>
    <experiments>3</experiments>
</comment>
<comment type="interaction">
    <interactant intactId="EBI-371642">
        <id>P19490</id>
    </interactant>
    <interactant intactId="EBI-375655">
        <id>P31016</id>
        <label>Dlg4</label>
    </interactant>
    <organismsDiffer>false</organismsDiffer>
    <experiments>5</experiments>
</comment>
<comment type="interaction">
    <interactant intactId="EBI-371642">
        <id>P19490</id>
    </interactant>
    <interactant intactId="EBI-371642">
        <id>P19490</id>
        <label>Gria1</label>
    </interactant>
    <organismsDiffer>false</organismsDiffer>
    <experiments>2</experiments>
</comment>
<comment type="interaction">
    <interactant intactId="EBI-371642">
        <id>P19490</id>
    </interactant>
    <interactant intactId="EBI-77718">
        <id>P19491</id>
        <label>Gria2</label>
    </interactant>
    <organismsDiffer>false</organismsDiffer>
    <experiments>3</experiments>
</comment>
<comment type="interaction">
    <interactant intactId="EBI-371642">
        <id>P19490</id>
    </interactant>
    <interactant intactId="EBI-978371">
        <id>B2GV74</id>
        <label>Klc2</label>
    </interactant>
    <organismsDiffer>false</organismsDiffer>
    <experiments>2</experiments>
</comment>
<comment type="interaction">
    <interactant intactId="EBI-371642">
        <id>P19490</id>
    </interactant>
    <interactant intactId="EBI-975940">
        <id>P70569</id>
        <label>Myo5b</label>
    </interactant>
    <organismsDiffer>false</organismsDiffer>
    <experiments>2</experiments>
</comment>
<comment type="interaction">
    <interactant intactId="EBI-26900830">
        <id>P19490-2</id>
    </interactant>
    <interactant intactId="EBI-15817825">
        <id>P19491-2</id>
        <label>Gria2</label>
    </interactant>
    <organismsDiffer>false</organismsDiffer>
    <experiments>2</experiments>
</comment>
<comment type="subcellular location">
    <subcellularLocation>
        <location evidence="2">Cell membrane</location>
        <topology evidence="2">Multi-pass membrane protein</topology>
    </subcellularLocation>
    <subcellularLocation>
        <location evidence="9">Endoplasmic reticulum membrane</location>
        <topology evidence="32">Multi-pass membrane protein</topology>
    </subcellularLocation>
    <subcellularLocation>
        <location evidence="2">Postsynaptic cell membrane</location>
        <topology evidence="2">Multi-pass membrane protein</topology>
    </subcellularLocation>
    <subcellularLocation>
        <location evidence="2">Postsynaptic density membrane</location>
        <topology evidence="32">Multi-pass membrane protein</topology>
    </subcellularLocation>
    <subcellularLocation>
        <location evidence="2">Cell projection</location>
        <location evidence="2">Dendrite</location>
    </subcellularLocation>
    <subcellularLocation>
        <location evidence="2">Cell projection</location>
        <location evidence="2">Dendritic spine</location>
    </subcellularLocation>
    <subcellularLocation>
        <location evidence="9">Early endosome membrane</location>
        <topology evidence="32">Multi-pass membrane protein</topology>
    </subcellularLocation>
    <subcellularLocation>
        <location evidence="9">Recycling endosome membrane</location>
        <topology evidence="32">Multi-pass membrane protein</topology>
    </subcellularLocation>
    <subcellularLocation>
        <location evidence="2">Presynapse</location>
    </subcellularLocation>
    <subcellularLocation>
        <location evidence="2">Synapse</location>
    </subcellularLocation>
    <text evidence="2 9 18">Interaction with CACNG2, CNIH2 and CNIH3 promotes cell surface expression (PubMed:19265014). Colocalizes with PDLIM4 in early endosomes (PubMed:15456832). Displays a somatodendritic localization and is excluded from axons in neurons (By similarity). Localized to cone photoreceptor pedicles (By similarity).</text>
</comment>
<comment type="alternative products">
    <event type="alternative splicing"/>
    <isoform>
        <id>P19490-1</id>
        <name>Flop</name>
        <sequence type="displayed"/>
    </isoform>
    <isoform>
        <id>P19490-2</id>
        <name>Flip</name>
        <sequence type="described" ref="VSP_000097 VSP_000098 VSP_000099 VSP_000100 VSP_000101"/>
    </isoform>
</comment>
<comment type="tissue specificity">
    <text evidence="8">Detected in cerebellum (at protein level).</text>
</comment>
<comment type="domain">
    <text evidence="3">The M4 transmembrane segment mediates tetramerization and is required for cell surface expression.</text>
</comment>
<comment type="PTM">
    <text evidence="2 15 23 24 25">Phosphorylated at Ser-645 (PubMed:7877986). Phosphorylated at Ser-710 by PKC (PubMed:8848293). Phosphorylated at Ser-849 by PKC, PKA and CAMK2 (PubMed:9405465). Phosphorylated at Ser-863 by PKC, PKA and PRKG2 (PubMed:18031684, PubMed:9405465). Phosphorylation of Ser-863 is reduced by induction of long-term depression and increased by induction of long-term potentiation (By similarity).</text>
</comment>
<comment type="PTM">
    <text evidence="2 3">Palmitoylated. Depalmitoylated by CPT1C and upon L-glutamate stimulation. ZDHHC3/GODZ specifically palmitoylates Cys-603, which leads to Golgi retention and decreased cell surface expression (By similarity). In contrast, Cys-829 palmitoylation does not affect cell surface expression but regulates stimulation-dependent endocytosis (By similarity).</text>
</comment>
<comment type="polymorphism">
    <text>Both variants Ser-710 and Thr-710 are phosphorylated at this position.</text>
</comment>
<comment type="miscellaneous">
    <text evidence="34">The postsynaptic actions of L-glutamate are mediated by a variety of receptors that are named according to their selective agonists (Probable). This receptor binds AMPA (quisqualate) &gt; L-glutamate &gt; kainate (Probable).</text>
</comment>
<comment type="similarity">
    <text evidence="32">Belongs to the glutamate-gated ion channel (TC 1.A.10.1) family. GRIA1 subfamily.</text>
</comment>
<organism>
    <name type="scientific">Rattus norvegicus</name>
    <name type="common">Rat</name>
    <dbReference type="NCBI Taxonomy" id="10116"/>
    <lineage>
        <taxon>Eukaryota</taxon>
        <taxon>Metazoa</taxon>
        <taxon>Chordata</taxon>
        <taxon>Craniata</taxon>
        <taxon>Vertebrata</taxon>
        <taxon>Euteleostomi</taxon>
        <taxon>Mammalia</taxon>
        <taxon>Eutheria</taxon>
        <taxon>Euarchontoglires</taxon>
        <taxon>Glires</taxon>
        <taxon>Rodentia</taxon>
        <taxon>Myomorpha</taxon>
        <taxon>Muroidea</taxon>
        <taxon>Muridae</taxon>
        <taxon>Murinae</taxon>
        <taxon>Rattus</taxon>
    </lineage>
</organism>
<reference key="1">
    <citation type="journal article" date="1989" name="Nature">
        <title>Cloning by functional expression of a member of the glutamate receptor family.</title>
        <authorList>
            <person name="Hollmann M."/>
            <person name="O'Shea-Greenfield A."/>
            <person name="Rogers S.W."/>
            <person name="Heinemann S.F."/>
        </authorList>
    </citation>
    <scope>NUCLEOTIDE SEQUENCE [MRNA] (ISOFORM FLOP)</scope>
    <scope>FUNCTION</scope>
    <source>
        <tissue>Forebrain</tissue>
    </source>
</reference>
<reference key="2">
    <citation type="submission" date="1998-07" db="EMBL/GenBank/DDBJ databases">
        <authorList>
            <person name="Hartley M."/>
        </authorList>
    </citation>
    <scope>SEQUENCE REVISION</scope>
</reference>
<reference key="3">
    <citation type="journal article" date="1990" name="Science">
        <title>A family of AMPA-selective glutamate receptors.</title>
        <authorList>
            <person name="Keinaenen K."/>
            <person name="Wisden W."/>
            <person name="Sommer B."/>
            <person name="Werner P."/>
            <person name="Herb A."/>
            <person name="Verdoorn T.A."/>
            <person name="Sakmann B."/>
            <person name="Seeburg P.H."/>
        </authorList>
    </citation>
    <scope>NUCLEOTIDE SEQUENCE [MRNA] (ISOFORM FLOP)</scope>
    <scope>FUNCTION</scope>
    <scope>ACTIVITY REGULATION</scope>
    <source>
        <tissue>Brain</tissue>
    </source>
</reference>
<reference key="4">
    <citation type="submission" date="2006-01" db="EMBL/GenBank/DDBJ databases">
        <authorList>
            <person name="Keinaenen K."/>
            <person name="Wisden W."/>
            <person name="Sommer B."/>
            <person name="Werner P."/>
            <person name="Herb A."/>
            <person name="Verdoorn T.A."/>
            <person name="Sakmann B."/>
            <person name="Seeburg P.H."/>
        </authorList>
    </citation>
    <scope>SEQUENCE REVISION TO 67; 248; 698; 710; 789 AND 893</scope>
</reference>
<reference key="5">
    <citation type="journal article" date="1990" name="Science">
        <title>Molecular cloning and functional expression of glutamate receptor subunit genes.</title>
        <authorList>
            <person name="Boulter J."/>
            <person name="Hollmann M."/>
            <person name="O'Shea-Greenfield A."/>
            <person name="Hartley M."/>
            <person name="Deneris E.S."/>
            <person name="Maron C."/>
            <person name="Heinemann S.F."/>
        </authorList>
    </citation>
    <scope>NUCLEOTIDE SEQUENCE [MRNA] (ISOFORM FLOP)</scope>
    <scope>FUNCTION</scope>
    <scope>SUBUNIT</scope>
</reference>
<reference key="6">
    <citation type="journal article" date="1990" name="Science">
        <title>Flip and flop: a cell-specific functional switch in glutamate-operated channels of the CNS.</title>
        <authorList>
            <person name="Sommer B."/>
            <person name="Keinaenen K."/>
            <person name="Verdoorn T.A."/>
            <person name="Wisden W."/>
            <person name="Burnashev N."/>
            <person name="Herb A."/>
            <person name="Koehler M."/>
            <person name="Takagi T."/>
            <person name="Sakmann B."/>
            <person name="Seeburg P.H."/>
        </authorList>
    </citation>
    <scope>NUCLEOTIDE SEQUENCE [MRNA] (ISOFORM FLIP)</scope>
    <scope>FUNCTION</scope>
    <scope>VARIANT THR-710</scope>
    <source>
        <tissue>Brain</tissue>
    </source>
</reference>
<reference key="7">
    <citation type="journal article" date="1991" name="Science">
        <title>Ca2+ permeability of KA-AMPA--gated glutamate receptor channels depends on subunit composition.</title>
        <authorList>
            <person name="Hollmann M."/>
            <person name="Hartley M."/>
            <person name="Heinemann S."/>
        </authorList>
    </citation>
    <scope>FUNCTION</scope>
    <scope>CATALYTIC ACTIVITY</scope>
</reference>
<reference key="8">
    <citation type="journal article" date="1995" name="Proc. Natl. Acad. Sci. U.S.A.">
        <title>Identification of a Ca2+/calmodulin-dependent protein kinase II regulatory phosphorylation site in non-N-methyl-D-aspartate glutamate receptors.</title>
        <authorList>
            <person name="Yakel J.L."/>
            <person name="Vissavajjhala P."/>
            <person name="Derkach V.A."/>
            <person name="Brickey D.A."/>
            <person name="Soderling T.R."/>
        </authorList>
    </citation>
    <scope>PHOSPHORYLATION AT SER-645</scope>
</reference>
<reference key="9">
    <citation type="journal article" date="1995" name="Neurosci. Res.">
        <title>Antibody specific for phosphorylated AMPA-type glutamate receptors at GluR2 Ser-696.</title>
        <authorList>
            <person name="Nakazawa K."/>
            <person name="Tadakuma T."/>
            <person name="Nokihara K."/>
            <person name="Ito M."/>
        </authorList>
    </citation>
    <scope>VARIANT THR-710</scope>
    <scope>PHOSPHORYLATION AT SER-710</scope>
</reference>
<reference key="10">
    <citation type="journal article" date="1997" name="J. Biol. Chem.">
        <title>Phosphorylation of the alpha-amino-3-hydroxy-5-methylisoxazole4-propionic acid receptor GluR1 subunit by calcium/calmodulin-dependent kinase II.</title>
        <authorList>
            <person name="Mammen A.L."/>
            <person name="Kameyama K."/>
            <person name="Roche K.W."/>
            <person name="Huganir R.L."/>
        </authorList>
    </citation>
    <scope>PHOSPHORYLATION AT SER-849 AND SER-863</scope>
    <scope>MUTAGENESIS OF SER-645 AND SER-849</scope>
</reference>
<reference key="11">
    <citation type="journal article" date="1998" name="J. Biol. Chem.">
        <title>SAP97 is associated with the alpha-amino-3-hydroxy-5-methylisoxazole-4-propionic acid receptor GluR1 subunit.</title>
        <authorList>
            <person name="Leonard A.S."/>
            <person name="Davare M.A."/>
            <person name="Horne M.C."/>
            <person name="Garner C.C."/>
            <person name="Hell J.W."/>
        </authorList>
    </citation>
    <scope>INTERACTION WITH DLG1</scope>
</reference>
<reference key="12">
    <citation type="journal article" date="2002" name="J. Biol. Chem.">
        <title>Selective binding of synapse-associated protein 97 to GluR-A alpha-amino-5-hydroxy-3-methyl-4-isoxazole propionate receptor subunit is determined by a novel sequence motif.</title>
        <authorList>
            <person name="Cai C."/>
            <person name="Coleman S.K."/>
            <person name="Niemi K."/>
            <person name="Keinaenen K."/>
        </authorList>
    </citation>
    <scope>INTERACTION WITH DLG1</scope>
    <scope>SUBCELLULAR LOCATION</scope>
    <scope>TISSUE SPECIFICITY</scope>
    <scope>MUTAGENESIS OF THR-905 AND LEU-907</scope>
</reference>
<reference key="13">
    <citation type="journal article" date="2002" name="J. Physiol. (Lond.)">
        <title>Voltage and concentration dependence of Ca(2+) permeability in recombinant glutamate receptor subtypes.</title>
        <authorList>
            <person name="Jatzke C."/>
            <person name="Watanabe J."/>
            <person name="Wollmuth L.P."/>
        </authorList>
    </citation>
    <scope>FUNCTION</scope>
    <scope>CATALYTIC ACTIVITY</scope>
</reference>
<reference key="14">
    <citation type="journal article" date="2004" name="J. Neurosci.">
        <title>Actin/alpha-actinin-dependent transport of AMPA receptors in dendritic spines: role of the PDZ-LIM protein RIL.</title>
        <authorList>
            <person name="Schulz T.W."/>
            <person name="Nakagawa T."/>
            <person name="Licznerski P."/>
            <person name="Pawlak V."/>
            <person name="Kolleker A."/>
            <person name="Rozov A."/>
            <person name="Kim J."/>
            <person name="Dittgen T."/>
            <person name="Koehr G."/>
            <person name="Sheng M."/>
            <person name="Seeburg P.H."/>
            <person name="Osten P."/>
        </authorList>
    </citation>
    <scope>INTERACTION WITH PDLIM4</scope>
    <scope>SUBCELLULAR LOCATION</scope>
</reference>
<reference key="15">
    <citation type="journal article" date="2006" name="J. Biol. Chem.">
        <title>Different domains of the AMPA receptor direct stargazin-mediated trafficking and stargazin-mediated modulation of kinetics.</title>
        <authorList>
            <person name="Bedoukian M.A."/>
            <person name="Weeks A.M."/>
            <person name="Partin K.M."/>
        </authorList>
    </citation>
    <scope>FUNCTION</scope>
    <scope>SUBUNIT</scope>
    <scope>SUBCELLULAR LOCATION</scope>
    <scope>INTERACTION WITH CACNG2</scope>
</reference>
<reference key="16">
    <citation type="journal article" date="2006" name="Neuron">
        <title>SALM synaptic cell adhesion-like molecules regulate the differentiation of excitatory synapses.</title>
        <authorList>
            <person name="Ko J."/>
            <person name="Kim S."/>
            <person name="Chung H.S."/>
            <person name="Kim K."/>
            <person name="Han K."/>
            <person name="Kim H."/>
            <person name="Jun H."/>
            <person name="Kaang B.-K."/>
            <person name="Kim E."/>
        </authorList>
    </citation>
    <scope>INTERACTION WITH LRFN1</scope>
</reference>
<reference key="17">
    <citation type="journal article" date="2007" name="Neuron">
        <title>A GluR1-cGKII interaction regulates AMPA receptor trafficking.</title>
        <authorList>
            <person name="Serulle Y."/>
            <person name="Zhang S."/>
            <person name="Ninan I."/>
            <person name="Puzzo D."/>
            <person name="McCarthy M."/>
            <person name="Khatri L."/>
            <person name="Arancio O."/>
            <person name="Ziff E.B."/>
        </authorList>
    </citation>
    <scope>INTERACTION WITH PRKG2</scope>
    <scope>PHOSPHORYLATION AT SER-863</scope>
    <scope>MUTAGENESIS OF ARG-855 AND SER-863</scope>
</reference>
<reference key="18">
    <citation type="journal article" date="2008" name="Neuron">
        <title>AMPA receptor subunit-specific regulation by a distinct family of type II TARPs.</title>
        <authorList>
            <person name="Kato A.S."/>
            <person name="Siuda E.R."/>
            <person name="Nisenbaum E.S."/>
            <person name="Bredt D.S."/>
        </authorList>
    </citation>
    <scope>FUNCTION</scope>
    <scope>INTERACTION WITH CACNG5</scope>
</reference>
<reference key="19">
    <citation type="journal article" date="2009" name="Nat. Neurosci.">
        <title>Selective regulation of long-form calcium-permeable AMPA receptors by an atypical TARP, gamma-5.</title>
        <authorList>
            <person name="Soto D."/>
            <person name="Coombs I.D."/>
            <person name="Renzi M."/>
            <person name="Zonouzi M."/>
            <person name="Farrant M."/>
            <person name="Cull-Candy S.G."/>
        </authorList>
    </citation>
    <scope>INTERACTION WITH CACNG5</scope>
</reference>
<reference key="20">
    <citation type="journal article" date="2009" name="Nat. Neurosci.">
        <authorList>
            <person name="Soto D."/>
            <person name="Coombs I.D."/>
            <person name="Renzi M."/>
            <person name="Zonouzi M."/>
            <person name="Farrant M."/>
            <person name="Cull-Candy S.G."/>
        </authorList>
    </citation>
    <scope>ERRATUM OF PUBMED:19234459</scope>
</reference>
<reference key="21">
    <citation type="journal article" date="2009" name="Science">
        <title>Functional proteomics identify cornichon proteins as auxiliary subunits of AMPA receptors.</title>
        <authorList>
            <person name="Schwenk J."/>
            <person name="Harmel N."/>
            <person name="Zolles G."/>
            <person name="Bildl W."/>
            <person name="Kulik A."/>
            <person name="Heimrich B."/>
            <person name="Chisaka O."/>
            <person name="Jonas P."/>
            <person name="Schulte U."/>
            <person name="Fakler B."/>
            <person name="Kloecker N."/>
        </authorList>
    </citation>
    <scope>FUNCTION</scope>
    <scope>SUBUNIT</scope>
    <scope>SUBCELLULAR LOCATION</scope>
    <scope>IDENTIFICATION BY MASS SPECTROMETRY</scope>
</reference>
<reference key="22">
    <citation type="journal article" date="2010" name="Proc. Natl. Acad. Sci. U.S.A.">
        <title>Functional comparison of the effects of TARPs and cornichons on AMPA receptor trafficking and gating.</title>
        <authorList>
            <person name="Shi Y."/>
            <person name="Suh Y.H."/>
            <person name="Milstein A.D."/>
            <person name="Isozaki K."/>
            <person name="Schmid S.M."/>
            <person name="Roche K.W."/>
            <person name="Nicoll R.A."/>
        </authorList>
    </citation>
    <scope>INTERACTION WITH CNIH2 AND CACNG2</scope>
</reference>
<reference evidence="36 37" key="23">
    <citation type="journal article" date="2006" name="FEBS J.">
        <title>Crystal structure of the second PDZ domain of SAP97 in complex with a GluR-A C-terminal peptide.</title>
        <authorList>
            <person name="von Ossowski I."/>
            <person name="Oksanen E."/>
            <person name="von Ossowski L."/>
            <person name="Cai C."/>
            <person name="Sundberg M."/>
            <person name="Goldman A."/>
            <person name="Keinanen K."/>
        </authorList>
    </citation>
    <scope>X-RAY CRYSTALLOGRAPHY (2.21 ANGSTROMS) OF 890-907 IN COMPLEX WITH DLG1</scope>
    <scope>INTERACTION WITH DLG1</scope>
</reference>
<reference evidence="38" key="24">
    <citation type="journal article" date="2011" name="Biochem. J.">
        <title>Crystal structure of the glutamate receptor GluA1 N-terminal domain.</title>
        <authorList>
            <person name="Yao G."/>
            <person name="Zong Y."/>
            <person name="Gu S."/>
            <person name="Zhou J."/>
            <person name="Xu H."/>
            <person name="Mathews I.I."/>
            <person name="Jin R."/>
        </authorList>
    </citation>
    <scope>X-RAY CRYSTALLOGRAPHY (2.5 ANGSTROMS) OF 22-392</scope>
    <scope>SUBUNIT</scope>
    <scope>GLYCOSYLATION AT ASN-63; ASN-249; ASN-257 AND ASN-363</scope>
    <scope>DISULFIDE BOND</scope>
</reference>
<accession>P19490</accession>
<dbReference type="EMBL" id="X17184">
    <property type="protein sequence ID" value="CAA35050.1"/>
    <property type="molecule type" value="mRNA"/>
</dbReference>
<dbReference type="EMBL" id="M36418">
    <property type="protein sequence ID" value="AAA41243.2"/>
    <property type="molecule type" value="mRNA"/>
</dbReference>
<dbReference type="EMBL" id="M38060">
    <property type="protein sequence ID" value="AAA63479.1"/>
    <property type="molecule type" value="mRNA"/>
</dbReference>
<dbReference type="PIR" id="A40170">
    <property type="entry name" value="A40170"/>
</dbReference>
<dbReference type="PIR" id="S07059">
    <property type="entry name" value="ACRTK1"/>
</dbReference>
<dbReference type="RefSeq" id="NP_113796.1">
    <molecule id="P19490-1"/>
    <property type="nucleotide sequence ID" value="NM_031608.2"/>
</dbReference>
<dbReference type="RefSeq" id="XP_063125747.1">
    <molecule id="P19490-2"/>
    <property type="nucleotide sequence ID" value="XM_063269677.1"/>
</dbReference>
<dbReference type="PDB" id="2AWW">
    <property type="method" value="X-ray"/>
    <property type="resolution" value="2.21 A"/>
    <property type="chains" value="C=890-907"/>
</dbReference>
<dbReference type="PDB" id="2G2L">
    <property type="method" value="X-ray"/>
    <property type="resolution" value="2.35 A"/>
    <property type="chains" value="C/D=890-907"/>
</dbReference>
<dbReference type="PDB" id="3SAJ">
    <property type="method" value="X-ray"/>
    <property type="resolution" value="2.50 A"/>
    <property type="chains" value="A/B/C/D=22-392"/>
</dbReference>
<dbReference type="PDB" id="6NJL">
    <property type="method" value="EM"/>
    <property type="resolution" value="6.70 A"/>
    <property type="chains" value="A/C=1-907"/>
</dbReference>
<dbReference type="PDB" id="6NJN">
    <property type="method" value="EM"/>
    <property type="resolution" value="6.50 A"/>
    <property type="chains" value="A=1-907"/>
</dbReference>
<dbReference type="PDB" id="6QKC">
    <property type="method" value="EM"/>
    <property type="resolution" value="4.10 A"/>
    <property type="chains" value="A/C=1-907"/>
</dbReference>
<dbReference type="PDB" id="6QKZ">
    <property type="method" value="EM"/>
    <property type="resolution" value="6.30 A"/>
    <property type="chains" value="A/C=20-907"/>
</dbReference>
<dbReference type="PDB" id="7OCA">
    <property type="method" value="EM"/>
    <property type="resolution" value="3.40 A"/>
    <property type="chains" value="A/C=1-907"/>
</dbReference>
<dbReference type="PDB" id="7OCC">
    <property type="method" value="EM"/>
    <property type="resolution" value="3.40 A"/>
    <property type="chains" value="A/C=1-907"/>
</dbReference>
<dbReference type="PDB" id="7OCD">
    <property type="method" value="EM"/>
    <property type="resolution" value="3.50 A"/>
    <property type="chains" value="A/C=1-907"/>
</dbReference>
<dbReference type="PDB" id="7OCE">
    <property type="method" value="EM"/>
    <property type="resolution" value="3.10 A"/>
    <property type="chains" value="A/C=1-907"/>
</dbReference>
<dbReference type="PDB" id="7OCF">
    <property type="method" value="EM"/>
    <property type="resolution" value="3.60 A"/>
    <property type="chains" value="A/C=1-907"/>
</dbReference>
<dbReference type="PDB" id="7QHB">
    <property type="method" value="EM"/>
    <property type="resolution" value="3.50 A"/>
    <property type="chains" value="A/C=1-907"/>
</dbReference>
<dbReference type="PDB" id="7QHH">
    <property type="method" value="EM"/>
    <property type="resolution" value="3.60 A"/>
    <property type="chains" value="A/C=1-907"/>
</dbReference>
<dbReference type="PDB" id="8AYL">
    <property type="method" value="EM"/>
    <property type="resolution" value="3.20 A"/>
    <property type="chains" value="A/C=1-907"/>
</dbReference>
<dbReference type="PDB" id="8AYM">
    <property type="method" value="EM"/>
    <property type="resolution" value="3.30 A"/>
    <property type="chains" value="A/C=1-907"/>
</dbReference>
<dbReference type="PDB" id="8AYN">
    <property type="method" value="EM"/>
    <property type="resolution" value="2.80 A"/>
    <property type="chains" value="A/C=1-907"/>
</dbReference>
<dbReference type="PDB" id="8AYO">
    <property type="method" value="EM"/>
    <property type="resolution" value="3.30 A"/>
    <property type="chains" value="A/C=1-907"/>
</dbReference>
<dbReference type="PDB" id="8C1P">
    <property type="method" value="EM"/>
    <property type="resolution" value="2.90 A"/>
    <property type="chains" value="A/B/C/D=1-907"/>
</dbReference>
<dbReference type="PDB" id="8C1Q">
    <property type="method" value="EM"/>
    <property type="resolution" value="2.82 A"/>
    <property type="chains" value="A/B/C/D=1-907"/>
</dbReference>
<dbReference type="PDB" id="8C2H">
    <property type="method" value="EM"/>
    <property type="resolution" value="2.64 A"/>
    <property type="chains" value="A/B/C/D=1-907"/>
</dbReference>
<dbReference type="PDB" id="8C2I">
    <property type="method" value="EM"/>
    <property type="resolution" value="2.70 A"/>
    <property type="chains" value="A/B/C/D=1-907"/>
</dbReference>
<dbReference type="PDB" id="8P3T">
    <property type="method" value="EM"/>
    <property type="resolution" value="3.39 A"/>
    <property type="chains" value="A/B/C/D=1-907"/>
</dbReference>
<dbReference type="PDB" id="8P3U">
    <property type="method" value="EM"/>
    <property type="resolution" value="3.77 A"/>
    <property type="chains" value="A/B/C/D=1-907"/>
</dbReference>
<dbReference type="PDB" id="8P3V">
    <property type="method" value="EM"/>
    <property type="resolution" value="3.53 A"/>
    <property type="chains" value="A/B/C/D=1-907"/>
</dbReference>
<dbReference type="PDB" id="8P3W">
    <property type="method" value="EM"/>
    <property type="resolution" value="3.53 A"/>
    <property type="chains" value="A/B/C/D=1-907"/>
</dbReference>
<dbReference type="PDBsum" id="2AWW"/>
<dbReference type="PDBsum" id="2G2L"/>
<dbReference type="PDBsum" id="3SAJ"/>
<dbReference type="PDBsum" id="6NJL"/>
<dbReference type="PDBsum" id="6NJN"/>
<dbReference type="PDBsum" id="6QKC"/>
<dbReference type="PDBsum" id="6QKZ"/>
<dbReference type="PDBsum" id="7OCA"/>
<dbReference type="PDBsum" id="7OCC"/>
<dbReference type="PDBsum" id="7OCD"/>
<dbReference type="PDBsum" id="7OCE"/>
<dbReference type="PDBsum" id="7OCF"/>
<dbReference type="PDBsum" id="7QHB"/>
<dbReference type="PDBsum" id="7QHH"/>
<dbReference type="PDBsum" id="8AYL"/>
<dbReference type="PDBsum" id="8AYM"/>
<dbReference type="PDBsum" id="8AYN"/>
<dbReference type="PDBsum" id="8AYO"/>
<dbReference type="PDBsum" id="8C1P"/>
<dbReference type="PDBsum" id="8C1Q"/>
<dbReference type="PDBsum" id="8C2H"/>
<dbReference type="PDBsum" id="8C2I"/>
<dbReference type="PDBsum" id="8P3T"/>
<dbReference type="PDBsum" id="8P3U"/>
<dbReference type="PDBsum" id="8P3V"/>
<dbReference type="PDBsum" id="8P3W"/>
<dbReference type="EMDB" id="EMD-12802"/>
<dbReference type="EMDB" id="EMD-12803"/>
<dbReference type="EMDB" id="EMD-12804"/>
<dbReference type="EMDB" id="EMD-12805"/>
<dbReference type="EMDB" id="EMD-12806"/>
<dbReference type="EMDB" id="EMD-13969"/>
<dbReference type="EMDB" id="EMD-13972"/>
<dbReference type="EMDB" id="EMD-15714"/>
<dbReference type="EMDB" id="EMD-15716"/>
<dbReference type="EMDB" id="EMD-15717"/>
<dbReference type="EMDB" id="EMD-15718"/>
<dbReference type="EMDB" id="EMD-16379"/>
<dbReference type="EMDB" id="EMD-16380"/>
<dbReference type="EMDB" id="EMD-16390"/>
<dbReference type="EMDB" id="EMD-16391"/>
<dbReference type="EMDB" id="EMD-17394"/>
<dbReference type="EMDB" id="EMD-17395"/>
<dbReference type="EMDB" id="EMD-17396"/>
<dbReference type="EMDB" id="EMD-17397"/>
<dbReference type="EMDB" id="EMD-4572"/>
<dbReference type="EMDB" id="EMD-4575"/>
<dbReference type="EMDB" id="EMD-9387"/>
<dbReference type="EMDB" id="EMD-9389"/>
<dbReference type="SMR" id="P19490"/>
<dbReference type="BioGRID" id="248399">
    <property type="interactions" value="20"/>
</dbReference>
<dbReference type="ComplexPortal" id="CPX-8766">
    <property type="entry name" value="GluA1-GluA2 AMPA receptor complex"/>
</dbReference>
<dbReference type="CORUM" id="P19490"/>
<dbReference type="DIP" id="DIP-30929N"/>
<dbReference type="ELM" id="P19490"/>
<dbReference type="FunCoup" id="P19490">
    <property type="interactions" value="1008"/>
</dbReference>
<dbReference type="IntAct" id="P19490">
    <property type="interactions" value="27"/>
</dbReference>
<dbReference type="MINT" id="P19490"/>
<dbReference type="STRING" id="10116.ENSRNOP00000074119"/>
<dbReference type="BindingDB" id="P19490"/>
<dbReference type="ChEMBL" id="CHEMBL3753"/>
<dbReference type="DrugCentral" id="P19490"/>
<dbReference type="TCDB" id="1.A.10.1.1">
    <property type="family name" value="the glutamate-gated ion channel (gic) family of neurotransmitter receptors"/>
</dbReference>
<dbReference type="GlyCosmos" id="P19490">
    <property type="glycosylation" value="6 sites, No reported glycans"/>
</dbReference>
<dbReference type="GlyGen" id="P19490">
    <property type="glycosylation" value="6 sites"/>
</dbReference>
<dbReference type="iPTMnet" id="P19490"/>
<dbReference type="PhosphoSitePlus" id="P19490"/>
<dbReference type="SwissPalm" id="P19490"/>
<dbReference type="PaxDb" id="10116-ENSRNOP00000064722"/>
<dbReference type="ABCD" id="P19490">
    <property type="antibodies" value="2 sequenced antibodies"/>
</dbReference>
<dbReference type="Ensembl" id="ENSRNOT00000071615.4">
    <molecule id="P19490-1"/>
    <property type="protein sequence ID" value="ENSRNOP00000064722.3"/>
    <property type="gene ID" value="ENSRNOG00000045816.4"/>
</dbReference>
<dbReference type="Ensembl" id="ENSRNOT00000081136.2">
    <molecule id="P19490-2"/>
    <property type="protein sequence ID" value="ENSRNOP00000074119.2"/>
    <property type="gene ID" value="ENSRNOG00000045816.4"/>
</dbReference>
<dbReference type="GeneID" id="50592"/>
<dbReference type="KEGG" id="rno:50592"/>
<dbReference type="UCSC" id="RGD:621531">
    <molecule id="P19490-1"/>
    <property type="organism name" value="rat"/>
</dbReference>
<dbReference type="AGR" id="RGD:621531"/>
<dbReference type="CTD" id="2890"/>
<dbReference type="RGD" id="621531">
    <property type="gene designation" value="Gria1"/>
</dbReference>
<dbReference type="eggNOG" id="KOG1054">
    <property type="taxonomic scope" value="Eukaryota"/>
</dbReference>
<dbReference type="GeneTree" id="ENSGT00940000157342"/>
<dbReference type="InParanoid" id="P19490"/>
<dbReference type="OMA" id="PGMWFGT"/>
<dbReference type="OrthoDB" id="20588at9989"/>
<dbReference type="PhylomeDB" id="P19490"/>
<dbReference type="Reactome" id="R-RNO-204005">
    <property type="pathway name" value="COPII-mediated vesicle transport"/>
</dbReference>
<dbReference type="Reactome" id="R-RNO-399710">
    <property type="pathway name" value="Activation of AMPA receptors"/>
</dbReference>
<dbReference type="Reactome" id="R-RNO-399719">
    <property type="pathway name" value="Trafficking of AMPA receptors"/>
</dbReference>
<dbReference type="Reactome" id="R-RNO-416993">
    <property type="pathway name" value="Trafficking of GluR2-containing AMPA receptors"/>
</dbReference>
<dbReference type="Reactome" id="R-RNO-438066">
    <property type="pathway name" value="Unblocking of NMDA receptors, glutamate binding and activation"/>
</dbReference>
<dbReference type="Reactome" id="R-RNO-5694530">
    <property type="pathway name" value="Cargo concentration in the ER"/>
</dbReference>
<dbReference type="Reactome" id="R-RNO-8849932">
    <property type="pathway name" value="Synaptic adhesion-like molecules"/>
</dbReference>
<dbReference type="EvolutionaryTrace" id="P19490"/>
<dbReference type="PRO" id="PR:P19490"/>
<dbReference type="Proteomes" id="UP000002494">
    <property type="component" value="Chromosome 10"/>
</dbReference>
<dbReference type="GO" id="GO:0032281">
    <property type="term" value="C:AMPA glutamate receptor complex"/>
    <property type="evidence" value="ECO:0000314"/>
    <property type="project" value="UniProtKB"/>
</dbReference>
<dbReference type="GO" id="GO:0032279">
    <property type="term" value="C:asymmetric synapse"/>
    <property type="evidence" value="ECO:0000314"/>
    <property type="project" value="RGD"/>
</dbReference>
<dbReference type="GO" id="GO:0044308">
    <property type="term" value="C:axonal spine"/>
    <property type="evidence" value="ECO:0000266"/>
    <property type="project" value="RGD"/>
</dbReference>
<dbReference type="GO" id="GO:0044297">
    <property type="term" value="C:cell body"/>
    <property type="evidence" value="ECO:0000266"/>
    <property type="project" value="RGD"/>
</dbReference>
<dbReference type="GO" id="GO:0009986">
    <property type="term" value="C:cell surface"/>
    <property type="evidence" value="ECO:0000314"/>
    <property type="project" value="RGD"/>
</dbReference>
<dbReference type="GO" id="GO:0005911">
    <property type="term" value="C:cell-cell junction"/>
    <property type="evidence" value="ECO:0000314"/>
    <property type="project" value="UniProtKB"/>
</dbReference>
<dbReference type="GO" id="GO:0005829">
    <property type="term" value="C:cytosol"/>
    <property type="evidence" value="ECO:0000314"/>
    <property type="project" value="RGD"/>
</dbReference>
<dbReference type="GO" id="GO:0030425">
    <property type="term" value="C:dendrite"/>
    <property type="evidence" value="ECO:0000314"/>
    <property type="project" value="ARUK-UCL"/>
</dbReference>
<dbReference type="GO" id="GO:0032590">
    <property type="term" value="C:dendrite membrane"/>
    <property type="evidence" value="ECO:0000314"/>
    <property type="project" value="RGD"/>
</dbReference>
<dbReference type="GO" id="GO:0043198">
    <property type="term" value="C:dendritic shaft"/>
    <property type="evidence" value="ECO:0000314"/>
    <property type="project" value="UniProtKB"/>
</dbReference>
<dbReference type="GO" id="GO:0043197">
    <property type="term" value="C:dendritic spine"/>
    <property type="evidence" value="ECO:0000314"/>
    <property type="project" value="ARUK-UCL"/>
</dbReference>
<dbReference type="GO" id="GO:0032591">
    <property type="term" value="C:dendritic spine membrane"/>
    <property type="evidence" value="ECO:0000266"/>
    <property type="project" value="RGD"/>
</dbReference>
<dbReference type="GO" id="GO:0005769">
    <property type="term" value="C:early endosome"/>
    <property type="evidence" value="ECO:0000314"/>
    <property type="project" value="UniProtKB"/>
</dbReference>
<dbReference type="GO" id="GO:0031901">
    <property type="term" value="C:early endosome membrane"/>
    <property type="evidence" value="ECO:0000314"/>
    <property type="project" value="UniProtKB"/>
</dbReference>
<dbReference type="GO" id="GO:0005783">
    <property type="term" value="C:endoplasmic reticulum"/>
    <property type="evidence" value="ECO:0000266"/>
    <property type="project" value="RGD"/>
</dbReference>
<dbReference type="GO" id="GO:0005789">
    <property type="term" value="C:endoplasmic reticulum membrane"/>
    <property type="evidence" value="ECO:0000314"/>
    <property type="project" value="UniProtKB"/>
</dbReference>
<dbReference type="GO" id="GO:0060076">
    <property type="term" value="C:excitatory synapse"/>
    <property type="evidence" value="ECO:0000314"/>
    <property type="project" value="BHF-UCL"/>
</dbReference>
<dbReference type="GO" id="GO:0009897">
    <property type="term" value="C:external side of plasma membrane"/>
    <property type="evidence" value="ECO:0000314"/>
    <property type="project" value="RGD"/>
</dbReference>
<dbReference type="GO" id="GO:0098978">
    <property type="term" value="C:glutamatergic synapse"/>
    <property type="evidence" value="ECO:0000314"/>
    <property type="project" value="SynGO"/>
</dbReference>
<dbReference type="GO" id="GO:0008328">
    <property type="term" value="C:ionotropic glutamate receptor complex"/>
    <property type="evidence" value="ECO:0000266"/>
    <property type="project" value="RGD"/>
</dbReference>
<dbReference type="GO" id="GO:0016020">
    <property type="term" value="C:membrane"/>
    <property type="evidence" value="ECO:0000266"/>
    <property type="project" value="RGD"/>
</dbReference>
<dbReference type="GO" id="GO:0031594">
    <property type="term" value="C:neuromuscular junction"/>
    <property type="evidence" value="ECO:0000314"/>
    <property type="project" value="RGD"/>
</dbReference>
<dbReference type="GO" id="GO:0043005">
    <property type="term" value="C:neuron projection"/>
    <property type="evidence" value="ECO:0000314"/>
    <property type="project" value="RGD"/>
</dbReference>
<dbReference type="GO" id="GO:0044309">
    <property type="term" value="C:neuron spine"/>
    <property type="evidence" value="ECO:0000314"/>
    <property type="project" value="RGD"/>
</dbReference>
<dbReference type="GO" id="GO:0043025">
    <property type="term" value="C:neuronal cell body"/>
    <property type="evidence" value="ECO:0000314"/>
    <property type="project" value="UniProtKB"/>
</dbReference>
<dbReference type="GO" id="GO:0032809">
    <property type="term" value="C:neuronal cell body membrane"/>
    <property type="evidence" value="ECO:0000314"/>
    <property type="project" value="RGD"/>
</dbReference>
<dbReference type="GO" id="GO:0099544">
    <property type="term" value="C:perisynaptic space"/>
    <property type="evidence" value="ECO:0000266"/>
    <property type="project" value="RGD"/>
</dbReference>
<dbReference type="GO" id="GO:0005886">
    <property type="term" value="C:plasma membrane"/>
    <property type="evidence" value="ECO:0000314"/>
    <property type="project" value="ARUK-UCL"/>
</dbReference>
<dbReference type="GO" id="GO:0098794">
    <property type="term" value="C:postsynapse"/>
    <property type="evidence" value="ECO:0000266"/>
    <property type="project" value="RGD"/>
</dbReference>
<dbReference type="GO" id="GO:0014069">
    <property type="term" value="C:postsynaptic density"/>
    <property type="evidence" value="ECO:0000314"/>
    <property type="project" value="RGD"/>
</dbReference>
<dbReference type="GO" id="GO:0098839">
    <property type="term" value="C:postsynaptic density membrane"/>
    <property type="evidence" value="ECO:0000314"/>
    <property type="project" value="SynGO"/>
</dbReference>
<dbReference type="GO" id="GO:0099092">
    <property type="term" value="C:postsynaptic density, intracellular component"/>
    <property type="evidence" value="ECO:0000314"/>
    <property type="project" value="RGD"/>
</dbReference>
<dbReference type="GO" id="GO:0045211">
    <property type="term" value="C:postsynaptic membrane"/>
    <property type="evidence" value="ECO:0000314"/>
    <property type="project" value="SynGO"/>
</dbReference>
<dbReference type="GO" id="GO:0098793">
    <property type="term" value="C:presynapse"/>
    <property type="evidence" value="ECO:0000250"/>
    <property type="project" value="UniProtKB"/>
</dbReference>
<dbReference type="GO" id="GO:0048787">
    <property type="term" value="C:presynaptic active zone membrane"/>
    <property type="evidence" value="ECO:0000314"/>
    <property type="project" value="SynGO"/>
</dbReference>
<dbReference type="GO" id="GO:0042734">
    <property type="term" value="C:presynaptic membrane"/>
    <property type="evidence" value="ECO:0000314"/>
    <property type="project" value="SynGO"/>
</dbReference>
<dbReference type="GO" id="GO:0032991">
    <property type="term" value="C:protein-containing complex"/>
    <property type="evidence" value="ECO:0000314"/>
    <property type="project" value="RGD"/>
</dbReference>
<dbReference type="GO" id="GO:1990635">
    <property type="term" value="C:proximal dendrite"/>
    <property type="evidence" value="ECO:0000314"/>
    <property type="project" value="RGD"/>
</dbReference>
<dbReference type="GO" id="GO:0055037">
    <property type="term" value="C:recycling endosome"/>
    <property type="evidence" value="ECO:0000266"/>
    <property type="project" value="RGD"/>
</dbReference>
<dbReference type="GO" id="GO:0055038">
    <property type="term" value="C:recycling endosome membrane"/>
    <property type="evidence" value="ECO:0000314"/>
    <property type="project" value="UniProtKB"/>
</dbReference>
<dbReference type="GO" id="GO:0036477">
    <property type="term" value="C:somatodendritic compartment"/>
    <property type="evidence" value="ECO:0000266"/>
    <property type="project" value="RGD"/>
</dbReference>
<dbReference type="GO" id="GO:0045202">
    <property type="term" value="C:synapse"/>
    <property type="evidence" value="ECO:0000314"/>
    <property type="project" value="SynGO-UCL"/>
</dbReference>
<dbReference type="GO" id="GO:0097060">
    <property type="term" value="C:synaptic membrane"/>
    <property type="evidence" value="ECO:0000314"/>
    <property type="project" value="ARUK-UCL"/>
</dbReference>
<dbReference type="GO" id="GO:0008021">
    <property type="term" value="C:synaptic vesicle"/>
    <property type="evidence" value="ECO:0000266"/>
    <property type="project" value="RGD"/>
</dbReference>
<dbReference type="GO" id="GO:0030672">
    <property type="term" value="C:synaptic vesicle membrane"/>
    <property type="evidence" value="ECO:0000266"/>
    <property type="project" value="RGD"/>
</dbReference>
<dbReference type="GO" id="GO:0008179">
    <property type="term" value="F:adenylate cyclase binding"/>
    <property type="evidence" value="ECO:0000314"/>
    <property type="project" value="RGD"/>
</dbReference>
<dbReference type="GO" id="GO:0004971">
    <property type="term" value="F:AMPA glutamate receptor activity"/>
    <property type="evidence" value="ECO:0000314"/>
    <property type="project" value="UniProtKB"/>
</dbReference>
<dbReference type="GO" id="GO:0001540">
    <property type="term" value="F:amyloid-beta binding"/>
    <property type="evidence" value="ECO:0000353"/>
    <property type="project" value="ARUK-UCL"/>
</dbReference>
<dbReference type="GO" id="GO:0031698">
    <property type="term" value="F:beta-2 adrenergic receptor binding"/>
    <property type="evidence" value="ECO:0000353"/>
    <property type="project" value="ARUK-UCL"/>
</dbReference>
<dbReference type="GO" id="GO:0001965">
    <property type="term" value="F:G-protein alpha-subunit binding"/>
    <property type="evidence" value="ECO:0000353"/>
    <property type="project" value="RGD"/>
</dbReference>
<dbReference type="GO" id="GO:0031681">
    <property type="term" value="F:G-protein beta-subunit binding"/>
    <property type="evidence" value="ECO:0000314"/>
    <property type="project" value="RGD"/>
</dbReference>
<dbReference type="GO" id="GO:0035254">
    <property type="term" value="F:glutamate receptor binding"/>
    <property type="evidence" value="ECO:0000353"/>
    <property type="project" value="UniProtKB"/>
</dbReference>
<dbReference type="GO" id="GO:0022849">
    <property type="term" value="F:glutamate-gated calcium ion channel activity"/>
    <property type="evidence" value="ECO:0000314"/>
    <property type="project" value="UniProtKB"/>
</dbReference>
<dbReference type="GO" id="GO:0004970">
    <property type="term" value="F:glutamate-gated receptor activity"/>
    <property type="evidence" value="ECO:0000314"/>
    <property type="project" value="UniProtKB"/>
</dbReference>
<dbReference type="GO" id="GO:0042802">
    <property type="term" value="F:identical protein binding"/>
    <property type="evidence" value="ECO:0000353"/>
    <property type="project" value="UniProtKB"/>
</dbReference>
<dbReference type="GO" id="GO:0019865">
    <property type="term" value="F:immunoglobulin binding"/>
    <property type="evidence" value="ECO:0000353"/>
    <property type="project" value="UniProtKB"/>
</dbReference>
<dbReference type="GO" id="GO:0099507">
    <property type="term" value="F:ligand-gated monoatomic ion channel activity involved in regulation of presynaptic membrane potential"/>
    <property type="evidence" value="ECO:0000266"/>
    <property type="project" value="RGD"/>
</dbReference>
<dbReference type="GO" id="GO:0031489">
    <property type="term" value="F:myosin V binding"/>
    <property type="evidence" value="ECO:0000353"/>
    <property type="project" value="RGD"/>
</dbReference>
<dbReference type="GO" id="GO:0030165">
    <property type="term" value="F:PDZ domain binding"/>
    <property type="evidence" value="ECO:0000353"/>
    <property type="project" value="RGD"/>
</dbReference>
<dbReference type="GO" id="GO:0051428">
    <property type="term" value="F:peptide hormone receptor binding"/>
    <property type="evidence" value="ECO:0000353"/>
    <property type="project" value="RGD"/>
</dbReference>
<dbReference type="GO" id="GO:0019904">
    <property type="term" value="F:protein domain specific binding"/>
    <property type="evidence" value="ECO:0000353"/>
    <property type="project" value="RGD"/>
</dbReference>
<dbReference type="GO" id="GO:0051018">
    <property type="term" value="F:protein kinase A binding"/>
    <property type="evidence" value="ECO:0000314"/>
    <property type="project" value="RGD"/>
</dbReference>
<dbReference type="GO" id="GO:0019901">
    <property type="term" value="F:protein kinase binding"/>
    <property type="evidence" value="ECO:0000353"/>
    <property type="project" value="RGD"/>
</dbReference>
<dbReference type="GO" id="GO:0097110">
    <property type="term" value="F:scaffold protein binding"/>
    <property type="evidence" value="ECO:0000353"/>
    <property type="project" value="SynGO-UCL"/>
</dbReference>
<dbReference type="GO" id="GO:0031267">
    <property type="term" value="F:small GTPase binding"/>
    <property type="evidence" value="ECO:0000353"/>
    <property type="project" value="RGD"/>
</dbReference>
<dbReference type="GO" id="GO:1904315">
    <property type="term" value="F:transmitter-gated monoatomic ion channel activity involved in regulation of postsynaptic membrane potential"/>
    <property type="evidence" value="ECO:0000314"/>
    <property type="project" value="SynGO"/>
</dbReference>
<dbReference type="GO" id="GO:0048266">
    <property type="term" value="P:behavioral response to pain"/>
    <property type="evidence" value="ECO:0000270"/>
    <property type="project" value="RGD"/>
</dbReference>
<dbReference type="GO" id="GO:0071418">
    <property type="term" value="P:cellular response to amine stimulus"/>
    <property type="evidence" value="ECO:0000270"/>
    <property type="project" value="RGD"/>
</dbReference>
<dbReference type="GO" id="GO:0071230">
    <property type="term" value="P:cellular response to amino acid stimulus"/>
    <property type="evidence" value="ECO:0000270"/>
    <property type="project" value="RGD"/>
</dbReference>
<dbReference type="GO" id="GO:0071242">
    <property type="term" value="P:cellular response to ammonium ion"/>
    <property type="evidence" value="ECO:0000266"/>
    <property type="project" value="RGD"/>
</dbReference>
<dbReference type="GO" id="GO:1990416">
    <property type="term" value="P:cellular response to brain-derived neurotrophic factor stimulus"/>
    <property type="evidence" value="ECO:0000314"/>
    <property type="project" value="RGD"/>
</dbReference>
<dbReference type="GO" id="GO:0071359">
    <property type="term" value="P:cellular response to dsRNA"/>
    <property type="evidence" value="ECO:0000270"/>
    <property type="project" value="RGD"/>
</dbReference>
<dbReference type="GO" id="GO:0071363">
    <property type="term" value="P:cellular response to growth factor stimulus"/>
    <property type="evidence" value="ECO:0000270"/>
    <property type="project" value="RGD"/>
</dbReference>
<dbReference type="GO" id="GO:1905232">
    <property type="term" value="P:cellular response to L-glutamate"/>
    <property type="evidence" value="ECO:0000270"/>
    <property type="project" value="RGD"/>
</dbReference>
<dbReference type="GO" id="GO:0071375">
    <property type="term" value="P:cellular response to peptide hormone stimulus"/>
    <property type="evidence" value="ECO:0000270"/>
    <property type="project" value="RGD"/>
</dbReference>
<dbReference type="GO" id="GO:0021987">
    <property type="term" value="P:cerebral cortex development"/>
    <property type="evidence" value="ECO:0000270"/>
    <property type="project" value="RGD"/>
</dbReference>
<dbReference type="GO" id="GO:0007268">
    <property type="term" value="P:chemical synaptic transmission"/>
    <property type="evidence" value="ECO:0000266"/>
    <property type="project" value="RGD"/>
</dbReference>
<dbReference type="GO" id="GO:1990708">
    <property type="term" value="P:conditioned place preference"/>
    <property type="evidence" value="ECO:0000315"/>
    <property type="project" value="RGD"/>
</dbReference>
<dbReference type="GO" id="GO:0007616">
    <property type="term" value="P:long-term memory"/>
    <property type="evidence" value="ECO:0000315"/>
    <property type="project" value="RGD"/>
</dbReference>
<dbReference type="GO" id="GO:0060292">
    <property type="term" value="P:long-term synaptic depression"/>
    <property type="evidence" value="ECO:0000266"/>
    <property type="project" value="RGD"/>
</dbReference>
<dbReference type="GO" id="GO:0060291">
    <property type="term" value="P:long-term synaptic potentiation"/>
    <property type="evidence" value="ECO:0000270"/>
    <property type="project" value="RGD"/>
</dbReference>
<dbReference type="GO" id="GO:0050804">
    <property type="term" value="P:modulation of chemical synaptic transmission"/>
    <property type="evidence" value="ECO:0000314"/>
    <property type="project" value="UniProtKB"/>
</dbReference>
<dbReference type="GO" id="GO:0019228">
    <property type="term" value="P:neuronal action potential"/>
    <property type="evidence" value="ECO:0000315"/>
    <property type="project" value="UniProtKB"/>
</dbReference>
<dbReference type="GO" id="GO:2000463">
    <property type="term" value="P:positive regulation of excitatory postsynaptic potential"/>
    <property type="evidence" value="ECO:0000315"/>
    <property type="project" value="RGD"/>
</dbReference>
<dbReference type="GO" id="GO:0010628">
    <property type="term" value="P:positive regulation of gene expression"/>
    <property type="evidence" value="ECO:0000315"/>
    <property type="project" value="RGD"/>
</dbReference>
<dbReference type="GO" id="GO:0090326">
    <property type="term" value="P:positive regulation of locomotion involved in locomotory behavior"/>
    <property type="evidence" value="ECO:0000315"/>
    <property type="project" value="RGD"/>
</dbReference>
<dbReference type="GO" id="GO:0045838">
    <property type="term" value="P:positive regulation of membrane potential"/>
    <property type="evidence" value="ECO:0000315"/>
    <property type="project" value="RGD"/>
</dbReference>
<dbReference type="GO" id="GO:0050806">
    <property type="term" value="P:positive regulation of synaptic transmission"/>
    <property type="evidence" value="ECO:0000315"/>
    <property type="project" value="UniProtKB"/>
</dbReference>
<dbReference type="GO" id="GO:0031623">
    <property type="term" value="P:receptor internalization"/>
    <property type="evidence" value="ECO:0000314"/>
    <property type="project" value="UniProtKB"/>
</dbReference>
<dbReference type="GO" id="GO:0034765">
    <property type="term" value="P:regulation of monoatomic ion transmembrane transport"/>
    <property type="evidence" value="ECO:0000315"/>
    <property type="project" value="RGD"/>
</dbReference>
<dbReference type="GO" id="GO:0001919">
    <property type="term" value="P:regulation of receptor recycling"/>
    <property type="evidence" value="ECO:0000315"/>
    <property type="project" value="UniProtKB"/>
</dbReference>
<dbReference type="GO" id="GO:0048167">
    <property type="term" value="P:regulation of synaptic plasticity"/>
    <property type="evidence" value="ECO:0000315"/>
    <property type="project" value="UniProtKB"/>
</dbReference>
<dbReference type="GO" id="GO:0046685">
    <property type="term" value="P:response to arsenic-containing substance"/>
    <property type="evidence" value="ECO:0000270"/>
    <property type="project" value="RGD"/>
</dbReference>
<dbReference type="GO" id="GO:0042220">
    <property type="term" value="P:response to cocaine"/>
    <property type="evidence" value="ECO:0000270"/>
    <property type="project" value="RGD"/>
</dbReference>
<dbReference type="GO" id="GO:0051602">
    <property type="term" value="P:response to electrical stimulus"/>
    <property type="evidence" value="ECO:0000270"/>
    <property type="project" value="RGD"/>
</dbReference>
<dbReference type="GO" id="GO:0032355">
    <property type="term" value="P:response to estradiol"/>
    <property type="evidence" value="ECO:0000270"/>
    <property type="project" value="RGD"/>
</dbReference>
<dbReference type="GO" id="GO:0045471">
    <property type="term" value="P:response to ethanol"/>
    <property type="evidence" value="ECO:0000270"/>
    <property type="project" value="RGD"/>
</dbReference>
<dbReference type="GO" id="GO:0060992">
    <property type="term" value="P:response to fungicide"/>
    <property type="evidence" value="ECO:0000270"/>
    <property type="project" value="RGD"/>
</dbReference>
<dbReference type="GO" id="GO:0010226">
    <property type="term" value="P:response to lithium ion"/>
    <property type="evidence" value="ECO:0000270"/>
    <property type="project" value="UniProtKB"/>
</dbReference>
<dbReference type="GO" id="GO:0043278">
    <property type="term" value="P:response to morphine"/>
    <property type="evidence" value="ECO:0000315"/>
    <property type="project" value="RGD"/>
</dbReference>
<dbReference type="GO" id="GO:0031667">
    <property type="term" value="P:response to nutrient levels"/>
    <property type="evidence" value="ECO:0000314"/>
    <property type="project" value="RGD"/>
</dbReference>
<dbReference type="GO" id="GO:0043434">
    <property type="term" value="P:response to peptide hormone"/>
    <property type="evidence" value="ECO:0000270"/>
    <property type="project" value="RGD"/>
</dbReference>
<dbReference type="GO" id="GO:1990911">
    <property type="term" value="P:response to psychosocial stress"/>
    <property type="evidence" value="ECO:0000270"/>
    <property type="project" value="RGD"/>
</dbReference>
<dbReference type="GO" id="GO:0009744">
    <property type="term" value="P:response to sucrose"/>
    <property type="evidence" value="ECO:0000314"/>
    <property type="project" value="RGD"/>
</dbReference>
<dbReference type="GO" id="GO:0009636">
    <property type="term" value="P:response to toxic substance"/>
    <property type="evidence" value="ECO:0000315"/>
    <property type="project" value="RGD"/>
</dbReference>
<dbReference type="GO" id="GO:0009410">
    <property type="term" value="P:response to xenobiotic stimulus"/>
    <property type="evidence" value="ECO:0000270"/>
    <property type="project" value="RGD"/>
</dbReference>
<dbReference type="GO" id="GO:0021510">
    <property type="term" value="P:spinal cord development"/>
    <property type="evidence" value="ECO:0000270"/>
    <property type="project" value="RGD"/>
</dbReference>
<dbReference type="GO" id="GO:0007416">
    <property type="term" value="P:synapse assembly"/>
    <property type="evidence" value="ECO:0000266"/>
    <property type="project" value="RGD"/>
</dbReference>
<dbReference type="GO" id="GO:0035249">
    <property type="term" value="P:synaptic transmission, glutamatergic"/>
    <property type="evidence" value="ECO:0000318"/>
    <property type="project" value="GO_Central"/>
</dbReference>
<dbReference type="CDD" id="cd06390">
    <property type="entry name" value="PBP1_iGluR_AMPA_GluR1"/>
    <property type="match status" value="1"/>
</dbReference>
<dbReference type="CDD" id="cd13729">
    <property type="entry name" value="PBP2_iGluR_AMPA_GluR1"/>
    <property type="match status" value="1"/>
</dbReference>
<dbReference type="FunFam" id="1.10.287.70:FF:000067">
    <property type="entry name" value="glutamate receptor 2 isoform X1"/>
    <property type="match status" value="1"/>
</dbReference>
<dbReference type="FunFam" id="3.40.190.10:FF:000001">
    <property type="entry name" value="Glutamate receptor ionotropic, kainate 2"/>
    <property type="match status" value="1"/>
</dbReference>
<dbReference type="FunFam" id="3.40.50.2300:FF:000004">
    <property type="entry name" value="Glutamate receptor, ionotropic, AMPA 2"/>
    <property type="match status" value="1"/>
</dbReference>
<dbReference type="FunFam" id="3.40.190.10:FF:000666">
    <property type="entry name" value="Glutamate receptor, ionotropic, AMPA 2a"/>
    <property type="match status" value="1"/>
</dbReference>
<dbReference type="Gene3D" id="1.10.287.70">
    <property type="match status" value="2"/>
</dbReference>
<dbReference type="Gene3D" id="3.40.50.2300">
    <property type="match status" value="2"/>
</dbReference>
<dbReference type="Gene3D" id="3.40.190.10">
    <property type="entry name" value="Periplasmic binding protein-like II"/>
    <property type="match status" value="2"/>
</dbReference>
<dbReference type="InterPro" id="IPR001828">
    <property type="entry name" value="ANF_lig-bd_rcpt"/>
</dbReference>
<dbReference type="InterPro" id="IPR019594">
    <property type="entry name" value="Glu/Gly-bd"/>
</dbReference>
<dbReference type="InterPro" id="IPR001508">
    <property type="entry name" value="Iono_Glu_rcpt_met"/>
</dbReference>
<dbReference type="InterPro" id="IPR015683">
    <property type="entry name" value="Ionotropic_Glu_rcpt"/>
</dbReference>
<dbReference type="InterPro" id="IPR001320">
    <property type="entry name" value="Iontro_rcpt_C"/>
</dbReference>
<dbReference type="InterPro" id="IPR028082">
    <property type="entry name" value="Peripla_BP_I"/>
</dbReference>
<dbReference type="PANTHER" id="PTHR18966">
    <property type="entry name" value="IONOTROPIC GLUTAMATE RECEPTOR"/>
    <property type="match status" value="1"/>
</dbReference>
<dbReference type="Pfam" id="PF01094">
    <property type="entry name" value="ANF_receptor"/>
    <property type="match status" value="1"/>
</dbReference>
<dbReference type="Pfam" id="PF00060">
    <property type="entry name" value="Lig_chan"/>
    <property type="match status" value="1"/>
</dbReference>
<dbReference type="Pfam" id="PF10613">
    <property type="entry name" value="Lig_chan-Glu_bd"/>
    <property type="match status" value="1"/>
</dbReference>
<dbReference type="PRINTS" id="PR00177">
    <property type="entry name" value="NMDARECEPTOR"/>
</dbReference>
<dbReference type="SMART" id="SM00918">
    <property type="entry name" value="Lig_chan-Glu_bd"/>
    <property type="match status" value="1"/>
</dbReference>
<dbReference type="SMART" id="SM00079">
    <property type="entry name" value="PBPe"/>
    <property type="match status" value="1"/>
</dbReference>
<dbReference type="SUPFAM" id="SSF53822">
    <property type="entry name" value="Periplasmic binding protein-like I"/>
    <property type="match status" value="1"/>
</dbReference>
<dbReference type="SUPFAM" id="SSF53850">
    <property type="entry name" value="Periplasmic binding protein-like II"/>
    <property type="match status" value="1"/>
</dbReference>
<dbReference type="SUPFAM" id="SSF81324">
    <property type="entry name" value="Voltage-gated potassium channels"/>
    <property type="match status" value="1"/>
</dbReference>
<sequence length="907" mass="101579">MPYIFAFFCTGFLGAVVGANFPNNIQIGGLFPNQQSQEHAAFRFALSQLTEPPKLLPQIDIVNISDSFEMTYRFCSQFSKGVYAIFGFYERRTVNMLTSFCGALHVCFITPSFPVDTSNQFVLQLRPELQEALISIIDHYKWQTFVYIYDADRGLSVLQRVLDTAAEKNWQVTAVNILTTTEEGYRMLFQDLEKKKERLVVVDCESERLNAILGQIVKLEKNGIGYHYILANLGFMDIDLNKFKESGANVTGFQLVNYTDTIPARIMQQWRTSDSRDHTRVDWKRPKYTSALTYDGVKVMAEAFQSLRRQRIDISRRGNAGDCLANPAVPWGQGIDIQRALQQVRFEGLTGNVQFNEKGRRTNYTLHVIEMKHDGIRKIGYWNEDDKFVPAATDAQAGGDNSSVQNRTYIVTTILEDPYVMLKKNANQFEGNDRYEGYCVELAAEIAKHVGYSYRLEIVSDGKYGARDPDTKAWNGMVGELVYGRADVAVAPLTITLVREEVIDFSKPFMSLGISIMIKKPQKSKPGVFSFLDPLAYEIWMCIVFAYIGVSVVLFLVSRFSPYEWHSEEFEEGRDQTTSDQSNEFGIFNSLWFSLGAFMQQGCDISPRSLSGRIVGGVWWFFTLIIISSYTANLAAFLTVERMVSPIESAEDLAKQTEIAYGTLEAGSTKEFFRRSKIAVFEKMWTYMKSAEPSVFVRTTEEGMIRVRKSKGKYAYLLESTMNEYIEQRKPCDTMKVGGNLDSKGYGIATPKGSALRNPVNLAVLKLNEQGLLDKLKNKWWYDKGECGSGGGDSKDKTSALSLSNVAGVFYILIGGLGLAMLVALIEFCYKSRSESKRMKGFCLIPQQSINEAIRTSTLPRNSGAGASGGGGSGENGRVVSQDFPKSMQSIPCMSHSSGMPLGATGL</sequence>
<name>GRIA1_RAT</name>
<gene>
    <name evidence="35" type="primary">Gria1</name>
    <name evidence="28" type="synonym">GluA1</name>
    <name evidence="30" type="synonym">Glur1</name>
</gene>
<protein>
    <recommendedName>
        <fullName evidence="32">Glutamate receptor 1</fullName>
        <shortName>GluR-1</shortName>
    </recommendedName>
    <alternativeName>
        <fullName>AMPA-selective glutamate receptor 1</fullName>
    </alternativeName>
    <alternativeName>
        <fullName evidence="29">GluR-A</fullName>
    </alternativeName>
    <alternativeName>
        <fullName evidence="31">GluR-K1</fullName>
    </alternativeName>
    <alternativeName>
        <fullName>Glutamate receptor ionotropic, AMPA 1</fullName>
    </alternativeName>
</protein>
<proteinExistence type="evidence at protein level"/>